<comment type="function">
    <text evidence="1">May be involved in photosynthetic membrane biogenesis.</text>
</comment>
<comment type="similarity">
    <text evidence="1">Belongs to the THF1 family.</text>
</comment>
<feature type="chain" id="PRO_0000235218" description="Protein Thf1">
    <location>
        <begin position="1"/>
        <end position="222"/>
    </location>
</feature>
<feature type="region of interest" description="Disordered" evidence="2">
    <location>
        <begin position="197"/>
        <end position="222"/>
    </location>
</feature>
<feature type="coiled-coil region" evidence="1">
    <location>
        <begin position="169"/>
        <end position="208"/>
    </location>
</feature>
<feature type="compositionally biased region" description="Low complexity" evidence="2">
    <location>
        <begin position="209"/>
        <end position="222"/>
    </location>
</feature>
<feature type="helix" evidence="3">
    <location>
        <begin position="7"/>
        <end position="17"/>
    </location>
</feature>
<feature type="helix" evidence="3">
    <location>
        <begin position="24"/>
        <end position="41"/>
    </location>
</feature>
<feature type="helix" evidence="3">
    <location>
        <begin position="50"/>
        <end position="63"/>
    </location>
</feature>
<feature type="turn" evidence="3">
    <location>
        <begin position="64"/>
        <end position="66"/>
    </location>
</feature>
<feature type="helix" evidence="3">
    <location>
        <begin position="70"/>
        <end position="72"/>
    </location>
</feature>
<feature type="helix" evidence="3">
    <location>
        <begin position="73"/>
        <end position="83"/>
    </location>
</feature>
<feature type="helix" evidence="3">
    <location>
        <begin position="88"/>
        <end position="96"/>
    </location>
</feature>
<feature type="helix" evidence="3">
    <location>
        <begin position="97"/>
        <end position="101"/>
    </location>
</feature>
<feature type="helix" evidence="3">
    <location>
        <begin position="106"/>
        <end position="114"/>
    </location>
</feature>
<feature type="helix" evidence="3">
    <location>
        <begin position="122"/>
        <end position="125"/>
    </location>
</feature>
<feature type="helix" evidence="3">
    <location>
        <begin position="133"/>
        <end position="145"/>
    </location>
</feature>
<feature type="helix" evidence="3">
    <location>
        <begin position="149"/>
        <end position="152"/>
    </location>
</feature>
<feature type="helix" evidence="3">
    <location>
        <begin position="154"/>
        <end position="161"/>
    </location>
</feature>
<feature type="turn" evidence="3">
    <location>
        <begin position="162"/>
        <end position="164"/>
    </location>
</feature>
<feature type="helix" evidence="3">
    <location>
        <begin position="169"/>
        <end position="181"/>
    </location>
</feature>
<feature type="turn" evidence="3">
    <location>
        <begin position="182"/>
        <end position="184"/>
    </location>
</feature>
<feature type="helix" evidence="3">
    <location>
        <begin position="185"/>
        <end position="187"/>
    </location>
</feature>
<keyword id="KW-0002">3D-structure</keyword>
<keyword id="KW-0175">Coiled coil</keyword>
<keyword id="KW-1185">Reference proteome</keyword>
<name>THF1_THEVB</name>
<proteinExistence type="evidence at protein level"/>
<protein>
    <recommendedName>
        <fullName evidence="1">Protein Thf1</fullName>
    </recommendedName>
</protein>
<accession>Q8DJT8</accession>
<reference key="1">
    <citation type="journal article" date="2002" name="DNA Res.">
        <title>Complete genome structure of the thermophilic cyanobacterium Thermosynechococcus elongatus BP-1.</title>
        <authorList>
            <person name="Nakamura Y."/>
            <person name="Kaneko T."/>
            <person name="Sato S."/>
            <person name="Ikeuchi M."/>
            <person name="Katoh H."/>
            <person name="Sasamoto S."/>
            <person name="Watanabe A."/>
            <person name="Iriguchi M."/>
            <person name="Kawashima K."/>
            <person name="Kimura T."/>
            <person name="Kishida Y."/>
            <person name="Kiyokawa C."/>
            <person name="Kohara M."/>
            <person name="Matsumoto M."/>
            <person name="Matsuno A."/>
            <person name="Nakazaki N."/>
            <person name="Shimpo S."/>
            <person name="Sugimoto M."/>
            <person name="Takeuchi C."/>
            <person name="Yamada M."/>
            <person name="Tabata S."/>
        </authorList>
    </citation>
    <scope>NUCLEOTIDE SEQUENCE [LARGE SCALE GENOMIC DNA]</scope>
    <source>
        <strain>NIES-2133 / IAM M-273 / BP-1</strain>
    </source>
</reference>
<gene>
    <name evidence="1" type="primary">thf1</name>
    <name type="ordered locus">tlr1134</name>
</gene>
<sequence>MQNPRTVSDTKRAFYAAHTRPIHSIYRRFIEELLVEIHLLRVNVDFRYSPLFALGVVTAFDQFMEGYQPEGDRDRIFHALCVAEEMNPQQLKEDAASWQQYQGRPLSQILDELNSGQPSAPLNSLNHTGKYSRLHAVGLYAFLQELAGEVTIHLNETLDQLAPVIPLPIEKVKRDLELYRSNLDKINQARSLMKELVEQERKRRAQQTSAPPAVDASSDAPA</sequence>
<organism>
    <name type="scientific">Thermosynechococcus vestitus (strain NIES-2133 / IAM M-273 / BP-1)</name>
    <dbReference type="NCBI Taxonomy" id="197221"/>
    <lineage>
        <taxon>Bacteria</taxon>
        <taxon>Bacillati</taxon>
        <taxon>Cyanobacteriota</taxon>
        <taxon>Cyanophyceae</taxon>
        <taxon>Acaryochloridales</taxon>
        <taxon>Thermosynechococcaceae</taxon>
        <taxon>Thermosynechococcus</taxon>
    </lineage>
</organism>
<evidence type="ECO:0000255" key="1">
    <source>
        <dbReference type="HAMAP-Rule" id="MF_01843"/>
    </source>
</evidence>
<evidence type="ECO:0000256" key="2">
    <source>
        <dbReference type="SAM" id="MobiDB-lite"/>
    </source>
</evidence>
<evidence type="ECO:0007829" key="3">
    <source>
        <dbReference type="PDB" id="5MJR"/>
    </source>
</evidence>
<dbReference type="EMBL" id="BA000039">
    <property type="protein sequence ID" value="BAC08686.1"/>
    <property type="molecule type" value="Genomic_DNA"/>
</dbReference>
<dbReference type="RefSeq" id="NP_681924.1">
    <property type="nucleotide sequence ID" value="NC_004113.1"/>
</dbReference>
<dbReference type="RefSeq" id="WP_011056976.1">
    <property type="nucleotide sequence ID" value="NC_004113.1"/>
</dbReference>
<dbReference type="PDB" id="5MJO">
    <property type="method" value="X-ray"/>
    <property type="resolution" value="1.55 A"/>
    <property type="chains" value="A=1-222"/>
</dbReference>
<dbReference type="PDB" id="5MJR">
    <property type="method" value="X-ray"/>
    <property type="resolution" value="1.38 A"/>
    <property type="chains" value="A=1-222"/>
</dbReference>
<dbReference type="PDB" id="5MJW">
    <property type="method" value="X-ray"/>
    <property type="resolution" value="2.47 A"/>
    <property type="chains" value="A=1-222"/>
</dbReference>
<dbReference type="PDB" id="5MLF">
    <property type="method" value="X-ray"/>
    <property type="resolution" value="3.64 A"/>
    <property type="chains" value="A/B/C/D/E/F/G=1-222"/>
</dbReference>
<dbReference type="PDBsum" id="5MJO"/>
<dbReference type="PDBsum" id="5MJR"/>
<dbReference type="PDBsum" id="5MJW"/>
<dbReference type="PDBsum" id="5MLF"/>
<dbReference type="SMR" id="Q8DJT8"/>
<dbReference type="STRING" id="197221.gene:10747729"/>
<dbReference type="EnsemblBacteria" id="BAC08686">
    <property type="protein sequence ID" value="BAC08686"/>
    <property type="gene ID" value="BAC08686"/>
</dbReference>
<dbReference type="KEGG" id="tel:tlr1134"/>
<dbReference type="PATRIC" id="fig|197221.4.peg.1190"/>
<dbReference type="eggNOG" id="ENOG502Z86M">
    <property type="taxonomic scope" value="Bacteria"/>
</dbReference>
<dbReference type="Proteomes" id="UP000000440">
    <property type="component" value="Chromosome"/>
</dbReference>
<dbReference type="GO" id="GO:0030096">
    <property type="term" value="C:plasma membrane-derived thylakoid photosystem II"/>
    <property type="evidence" value="ECO:0007669"/>
    <property type="project" value="TreeGrafter"/>
</dbReference>
<dbReference type="GO" id="GO:0010207">
    <property type="term" value="P:photosystem II assembly"/>
    <property type="evidence" value="ECO:0007669"/>
    <property type="project" value="InterPro"/>
</dbReference>
<dbReference type="HAMAP" id="MF_01843">
    <property type="entry name" value="Thf1"/>
    <property type="match status" value="1"/>
</dbReference>
<dbReference type="InterPro" id="IPR017499">
    <property type="entry name" value="Thf1"/>
</dbReference>
<dbReference type="NCBIfam" id="TIGR03060">
    <property type="entry name" value="PS_II_psb29"/>
    <property type="match status" value="1"/>
</dbReference>
<dbReference type="PANTHER" id="PTHR34793">
    <property type="entry name" value="PROTEIN THYLAKOID FORMATION 1, CHLOROPLASTIC"/>
    <property type="match status" value="1"/>
</dbReference>
<dbReference type="PANTHER" id="PTHR34793:SF1">
    <property type="entry name" value="PROTEIN THYLAKOID FORMATION 1, CHLOROPLASTIC"/>
    <property type="match status" value="1"/>
</dbReference>
<dbReference type="Pfam" id="PF11264">
    <property type="entry name" value="ThylakoidFormat"/>
    <property type="match status" value="1"/>
</dbReference>